<comment type="function">
    <text evidence="1">Participates actively in the response to hyperosmotic and heat shock by preventing the aggregation of stress-denatured proteins and by disaggregating proteins, also in an autonomous, DnaK-independent fashion. Unfolded proteins bind initially to DnaJ; upon interaction with the DnaJ-bound protein, DnaK hydrolyzes its bound ATP, resulting in the formation of a stable complex. GrpE releases ADP from DnaK; ATP binding to DnaK triggers the release of the substrate protein, thus completing the reaction cycle. Several rounds of ATP-dependent interactions between DnaJ, DnaK and GrpE are required for fully efficient folding. Also involved, together with DnaK and GrpE, in the DNA replication of plasmids through activation of initiation proteins.</text>
</comment>
<comment type="cofactor">
    <cofactor evidence="1">
        <name>Zn(2+)</name>
        <dbReference type="ChEBI" id="CHEBI:29105"/>
    </cofactor>
    <text evidence="1">Binds 2 Zn(2+) ions per monomer.</text>
</comment>
<comment type="subunit">
    <text evidence="1">Homodimer.</text>
</comment>
<comment type="subcellular location">
    <subcellularLocation>
        <location evidence="1">Cytoplasm</location>
    </subcellularLocation>
</comment>
<comment type="domain">
    <text evidence="1">The J domain is necessary and sufficient to stimulate DnaK ATPase activity. Zinc center 1 plays an important role in the autonomous, DnaK-independent chaperone activity of DnaJ. Zinc center 2 is essential for interaction with DnaK and for DnaJ activity.</text>
</comment>
<comment type="similarity">
    <text evidence="1">Belongs to the DnaJ family.</text>
</comment>
<sequence>MSDRGYYEVLGVSKGASDDEIKSAYRKLAIKYHPDKNKGDKEAEEKFKEATEAYEVLRDPQKRQAYDQFGKAGVNAGAGGGYGAGAYTDFSDIFGDFGDIFSEFFGGGGGGGSRGGGRRSGPQRGSDLRYNLEVSLEDAALGKEYKIEIPRLETCVDCTGSGASKGSSPTVCPDCSGTGQVRRTQGFFSVTTTCPRCKGKGKVISNPCKTCKGEGLTEKRRTIHIKIPAGVESGSRLKVSGEGESGPNGGPSGDLYVVTHIKKHPVFERQGNDLIVQKSISLSMACLGGEIEVPSIDGKTIQLKIPEGTESGQIFRLKGHGIPYLGSYGKGDQHVIIKVEIPKKLSKKQKELMEEFARESGEKVGSGGKSKLFFR</sequence>
<dbReference type="EMBL" id="CP000777">
    <property type="protein sequence ID" value="ABZ95731.1"/>
    <property type="molecule type" value="Genomic_DNA"/>
</dbReference>
<dbReference type="RefSeq" id="WP_012390298.1">
    <property type="nucleotide sequence ID" value="NC_010842.1"/>
</dbReference>
<dbReference type="SMR" id="B0SHT0"/>
<dbReference type="KEGG" id="lbf:LBF_3264"/>
<dbReference type="HOGENOM" id="CLU_017633_0_7_12"/>
<dbReference type="GO" id="GO:0005737">
    <property type="term" value="C:cytoplasm"/>
    <property type="evidence" value="ECO:0007669"/>
    <property type="project" value="UniProtKB-SubCell"/>
</dbReference>
<dbReference type="GO" id="GO:0005524">
    <property type="term" value="F:ATP binding"/>
    <property type="evidence" value="ECO:0007669"/>
    <property type="project" value="InterPro"/>
</dbReference>
<dbReference type="GO" id="GO:0031072">
    <property type="term" value="F:heat shock protein binding"/>
    <property type="evidence" value="ECO:0007669"/>
    <property type="project" value="InterPro"/>
</dbReference>
<dbReference type="GO" id="GO:0051082">
    <property type="term" value="F:unfolded protein binding"/>
    <property type="evidence" value="ECO:0007669"/>
    <property type="project" value="UniProtKB-UniRule"/>
</dbReference>
<dbReference type="GO" id="GO:0008270">
    <property type="term" value="F:zinc ion binding"/>
    <property type="evidence" value="ECO:0007669"/>
    <property type="project" value="UniProtKB-UniRule"/>
</dbReference>
<dbReference type="GO" id="GO:0051085">
    <property type="term" value="P:chaperone cofactor-dependent protein refolding"/>
    <property type="evidence" value="ECO:0007669"/>
    <property type="project" value="TreeGrafter"/>
</dbReference>
<dbReference type="GO" id="GO:0006260">
    <property type="term" value="P:DNA replication"/>
    <property type="evidence" value="ECO:0007669"/>
    <property type="project" value="UniProtKB-KW"/>
</dbReference>
<dbReference type="GO" id="GO:0042026">
    <property type="term" value="P:protein refolding"/>
    <property type="evidence" value="ECO:0007669"/>
    <property type="project" value="TreeGrafter"/>
</dbReference>
<dbReference type="GO" id="GO:0009408">
    <property type="term" value="P:response to heat"/>
    <property type="evidence" value="ECO:0007669"/>
    <property type="project" value="InterPro"/>
</dbReference>
<dbReference type="CDD" id="cd06257">
    <property type="entry name" value="DnaJ"/>
    <property type="match status" value="1"/>
</dbReference>
<dbReference type="CDD" id="cd10747">
    <property type="entry name" value="DnaJ_C"/>
    <property type="match status" value="1"/>
</dbReference>
<dbReference type="CDD" id="cd10719">
    <property type="entry name" value="DnaJ_zf"/>
    <property type="match status" value="1"/>
</dbReference>
<dbReference type="FunFam" id="1.10.287.110:FF:000034">
    <property type="entry name" value="Chaperone protein DnaJ"/>
    <property type="match status" value="1"/>
</dbReference>
<dbReference type="FunFam" id="2.60.260.20:FF:000005">
    <property type="entry name" value="Chaperone protein dnaJ 1, mitochondrial"/>
    <property type="match status" value="1"/>
</dbReference>
<dbReference type="FunFam" id="2.10.230.10:FF:000002">
    <property type="entry name" value="Molecular chaperone DnaJ"/>
    <property type="match status" value="1"/>
</dbReference>
<dbReference type="Gene3D" id="1.10.287.110">
    <property type="entry name" value="DnaJ domain"/>
    <property type="match status" value="1"/>
</dbReference>
<dbReference type="Gene3D" id="2.10.230.10">
    <property type="entry name" value="Heat shock protein DnaJ, cysteine-rich domain"/>
    <property type="match status" value="1"/>
</dbReference>
<dbReference type="Gene3D" id="2.60.260.20">
    <property type="entry name" value="Urease metallochaperone UreE, N-terminal domain"/>
    <property type="match status" value="2"/>
</dbReference>
<dbReference type="HAMAP" id="MF_01152">
    <property type="entry name" value="DnaJ"/>
    <property type="match status" value="1"/>
</dbReference>
<dbReference type="InterPro" id="IPR012724">
    <property type="entry name" value="DnaJ"/>
</dbReference>
<dbReference type="InterPro" id="IPR002939">
    <property type="entry name" value="DnaJ_C"/>
</dbReference>
<dbReference type="InterPro" id="IPR001623">
    <property type="entry name" value="DnaJ_domain"/>
</dbReference>
<dbReference type="InterPro" id="IPR018253">
    <property type="entry name" value="DnaJ_domain_CS"/>
</dbReference>
<dbReference type="InterPro" id="IPR008971">
    <property type="entry name" value="HSP40/DnaJ_pept-bd"/>
</dbReference>
<dbReference type="InterPro" id="IPR001305">
    <property type="entry name" value="HSP_DnaJ_Cys-rich_dom"/>
</dbReference>
<dbReference type="InterPro" id="IPR036410">
    <property type="entry name" value="HSP_DnaJ_Cys-rich_dom_sf"/>
</dbReference>
<dbReference type="InterPro" id="IPR036869">
    <property type="entry name" value="J_dom_sf"/>
</dbReference>
<dbReference type="NCBIfam" id="TIGR02349">
    <property type="entry name" value="DnaJ_bact"/>
    <property type="match status" value="1"/>
</dbReference>
<dbReference type="NCBIfam" id="NF008035">
    <property type="entry name" value="PRK10767.1"/>
    <property type="match status" value="1"/>
</dbReference>
<dbReference type="NCBIfam" id="NF010879">
    <property type="entry name" value="PRK14286.1"/>
    <property type="match status" value="1"/>
</dbReference>
<dbReference type="PANTHER" id="PTHR43096:SF48">
    <property type="entry name" value="CHAPERONE PROTEIN DNAJ"/>
    <property type="match status" value="1"/>
</dbReference>
<dbReference type="PANTHER" id="PTHR43096">
    <property type="entry name" value="DNAJ HOMOLOG 1, MITOCHONDRIAL-RELATED"/>
    <property type="match status" value="1"/>
</dbReference>
<dbReference type="Pfam" id="PF00226">
    <property type="entry name" value="DnaJ"/>
    <property type="match status" value="1"/>
</dbReference>
<dbReference type="Pfam" id="PF01556">
    <property type="entry name" value="DnaJ_C"/>
    <property type="match status" value="1"/>
</dbReference>
<dbReference type="Pfam" id="PF00684">
    <property type="entry name" value="DnaJ_CXXCXGXG"/>
    <property type="match status" value="1"/>
</dbReference>
<dbReference type="PRINTS" id="PR00625">
    <property type="entry name" value="JDOMAIN"/>
</dbReference>
<dbReference type="SMART" id="SM00271">
    <property type="entry name" value="DnaJ"/>
    <property type="match status" value="1"/>
</dbReference>
<dbReference type="SUPFAM" id="SSF46565">
    <property type="entry name" value="Chaperone J-domain"/>
    <property type="match status" value="1"/>
</dbReference>
<dbReference type="SUPFAM" id="SSF57938">
    <property type="entry name" value="DnaJ/Hsp40 cysteine-rich domain"/>
    <property type="match status" value="1"/>
</dbReference>
<dbReference type="SUPFAM" id="SSF49493">
    <property type="entry name" value="HSP40/DnaJ peptide-binding domain"/>
    <property type="match status" value="2"/>
</dbReference>
<dbReference type="PROSITE" id="PS00636">
    <property type="entry name" value="DNAJ_1"/>
    <property type="match status" value="1"/>
</dbReference>
<dbReference type="PROSITE" id="PS50076">
    <property type="entry name" value="DNAJ_2"/>
    <property type="match status" value="1"/>
</dbReference>
<dbReference type="PROSITE" id="PS51188">
    <property type="entry name" value="ZF_CR"/>
    <property type="match status" value="1"/>
</dbReference>
<reference key="1">
    <citation type="journal article" date="2008" name="PLoS ONE">
        <title>Genome sequence of the saprophyte Leptospira biflexa provides insights into the evolution of Leptospira and the pathogenesis of leptospirosis.</title>
        <authorList>
            <person name="Picardeau M."/>
            <person name="Bulach D.M."/>
            <person name="Bouchier C."/>
            <person name="Zuerner R.L."/>
            <person name="Zidane N."/>
            <person name="Wilson P.J."/>
            <person name="Creno S."/>
            <person name="Kuczek E.S."/>
            <person name="Bommezzadri S."/>
            <person name="Davis J.C."/>
            <person name="McGrath A."/>
            <person name="Johnson M.J."/>
            <person name="Boursaux-Eude C."/>
            <person name="Seemann T."/>
            <person name="Rouy Z."/>
            <person name="Coppel R.L."/>
            <person name="Rood J.I."/>
            <person name="Lajus A."/>
            <person name="Davies J.K."/>
            <person name="Medigue C."/>
            <person name="Adler B."/>
        </authorList>
    </citation>
    <scope>NUCLEOTIDE SEQUENCE [LARGE SCALE GENOMIC DNA]</scope>
    <source>
        <strain>Patoc 1 / Ames</strain>
    </source>
</reference>
<keyword id="KW-0143">Chaperone</keyword>
<keyword id="KW-0963">Cytoplasm</keyword>
<keyword id="KW-0235">DNA replication</keyword>
<keyword id="KW-0479">Metal-binding</keyword>
<keyword id="KW-0677">Repeat</keyword>
<keyword id="KW-0346">Stress response</keyword>
<keyword id="KW-0862">Zinc</keyword>
<keyword id="KW-0863">Zinc-finger</keyword>
<organism>
    <name type="scientific">Leptospira biflexa serovar Patoc (strain Patoc 1 / Ames)</name>
    <dbReference type="NCBI Taxonomy" id="355278"/>
    <lineage>
        <taxon>Bacteria</taxon>
        <taxon>Pseudomonadati</taxon>
        <taxon>Spirochaetota</taxon>
        <taxon>Spirochaetia</taxon>
        <taxon>Leptospirales</taxon>
        <taxon>Leptospiraceae</taxon>
        <taxon>Leptospira</taxon>
    </lineage>
</organism>
<gene>
    <name evidence="1" type="primary">dnaJ</name>
    <name type="ordered locus">LBF_3264</name>
</gene>
<accession>B0SHT0</accession>
<proteinExistence type="inferred from homology"/>
<evidence type="ECO:0000255" key="1">
    <source>
        <dbReference type="HAMAP-Rule" id="MF_01152"/>
    </source>
</evidence>
<name>DNAJ_LEPBA</name>
<feature type="chain" id="PRO_1000137702" description="Chaperone protein DnaJ">
    <location>
        <begin position="1"/>
        <end position="375"/>
    </location>
</feature>
<feature type="domain" description="J" evidence="1">
    <location>
        <begin position="5"/>
        <end position="70"/>
    </location>
</feature>
<feature type="repeat" description="CXXCXGXG motif">
    <location>
        <begin position="155"/>
        <end position="162"/>
    </location>
</feature>
<feature type="repeat" description="CXXCXGXG motif">
    <location>
        <begin position="172"/>
        <end position="179"/>
    </location>
</feature>
<feature type="repeat" description="CXXCXGXG motif">
    <location>
        <begin position="194"/>
        <end position="201"/>
    </location>
</feature>
<feature type="repeat" description="CXXCXGXG motif">
    <location>
        <begin position="208"/>
        <end position="215"/>
    </location>
</feature>
<feature type="zinc finger region" description="CR-type" evidence="1">
    <location>
        <begin position="142"/>
        <end position="220"/>
    </location>
</feature>
<feature type="binding site" evidence="1">
    <location>
        <position position="155"/>
    </location>
    <ligand>
        <name>Zn(2+)</name>
        <dbReference type="ChEBI" id="CHEBI:29105"/>
        <label>1</label>
    </ligand>
</feature>
<feature type="binding site" evidence="1">
    <location>
        <position position="158"/>
    </location>
    <ligand>
        <name>Zn(2+)</name>
        <dbReference type="ChEBI" id="CHEBI:29105"/>
        <label>1</label>
    </ligand>
</feature>
<feature type="binding site" evidence="1">
    <location>
        <position position="172"/>
    </location>
    <ligand>
        <name>Zn(2+)</name>
        <dbReference type="ChEBI" id="CHEBI:29105"/>
        <label>2</label>
    </ligand>
</feature>
<feature type="binding site" evidence="1">
    <location>
        <position position="175"/>
    </location>
    <ligand>
        <name>Zn(2+)</name>
        <dbReference type="ChEBI" id="CHEBI:29105"/>
        <label>2</label>
    </ligand>
</feature>
<feature type="binding site" evidence="1">
    <location>
        <position position="194"/>
    </location>
    <ligand>
        <name>Zn(2+)</name>
        <dbReference type="ChEBI" id="CHEBI:29105"/>
        <label>2</label>
    </ligand>
</feature>
<feature type="binding site" evidence="1">
    <location>
        <position position="197"/>
    </location>
    <ligand>
        <name>Zn(2+)</name>
        <dbReference type="ChEBI" id="CHEBI:29105"/>
        <label>2</label>
    </ligand>
</feature>
<feature type="binding site" evidence="1">
    <location>
        <position position="208"/>
    </location>
    <ligand>
        <name>Zn(2+)</name>
        <dbReference type="ChEBI" id="CHEBI:29105"/>
        <label>1</label>
    </ligand>
</feature>
<feature type="binding site" evidence="1">
    <location>
        <position position="211"/>
    </location>
    <ligand>
        <name>Zn(2+)</name>
        <dbReference type="ChEBI" id="CHEBI:29105"/>
        <label>1</label>
    </ligand>
</feature>
<protein>
    <recommendedName>
        <fullName evidence="1">Chaperone protein DnaJ</fullName>
    </recommendedName>
</protein>